<protein>
    <recommendedName>
        <fullName>Biotin carboxyl carrier protein of acetyl-CoA carboxylase</fullName>
        <shortName>BCCP</shortName>
    </recommendedName>
</protein>
<sequence>MDIRKIKKLIELVEESGISELEISEGEESVRISRAAPAASFPVMQQAYAAPMMQQPAQSNAAAPATVPSMEAPAAAEISGHIVRSPMVGTFYRTPSPDAKAFIEVGQKVNVGDTLCIVEAMKMMNQIEADKSGTVKAILVESGQPVEFDEPLVVIE</sequence>
<dbReference type="EMBL" id="AE014075">
    <property type="protein sequence ID" value="AAN82451.1"/>
    <property type="molecule type" value="Genomic_DNA"/>
</dbReference>
<dbReference type="RefSeq" id="WP_000354622.1">
    <property type="nucleotide sequence ID" value="NZ_CP051263.1"/>
</dbReference>
<dbReference type="BMRB" id="P0ABD9"/>
<dbReference type="SMR" id="P0ABD9"/>
<dbReference type="STRING" id="199310.c4011"/>
<dbReference type="GeneID" id="93778732"/>
<dbReference type="KEGG" id="ecc:c4011"/>
<dbReference type="eggNOG" id="COG0511">
    <property type="taxonomic scope" value="Bacteria"/>
</dbReference>
<dbReference type="HOGENOM" id="CLU_016733_3_1_6"/>
<dbReference type="BioCyc" id="ECOL199310:C4011-MONOMER"/>
<dbReference type="UniPathway" id="UPA00094"/>
<dbReference type="Proteomes" id="UP000001410">
    <property type="component" value="Chromosome"/>
</dbReference>
<dbReference type="GO" id="GO:0009317">
    <property type="term" value="C:acetyl-CoA carboxylase complex"/>
    <property type="evidence" value="ECO:0007669"/>
    <property type="project" value="InterPro"/>
</dbReference>
<dbReference type="GO" id="GO:0003989">
    <property type="term" value="F:acetyl-CoA carboxylase activity"/>
    <property type="evidence" value="ECO:0007669"/>
    <property type="project" value="InterPro"/>
</dbReference>
<dbReference type="GO" id="GO:0006633">
    <property type="term" value="P:fatty acid biosynthetic process"/>
    <property type="evidence" value="ECO:0007669"/>
    <property type="project" value="UniProtKB-UniPathway"/>
</dbReference>
<dbReference type="CDD" id="cd06850">
    <property type="entry name" value="biotinyl_domain"/>
    <property type="match status" value="1"/>
</dbReference>
<dbReference type="FunFam" id="2.40.50.100:FF:000003">
    <property type="entry name" value="Acetyl-CoA carboxylase biotin carboxyl carrier protein"/>
    <property type="match status" value="1"/>
</dbReference>
<dbReference type="Gene3D" id="2.40.50.100">
    <property type="match status" value="1"/>
</dbReference>
<dbReference type="InterPro" id="IPR001249">
    <property type="entry name" value="AcCoA_biotinCC"/>
</dbReference>
<dbReference type="InterPro" id="IPR001882">
    <property type="entry name" value="Biotin_BS"/>
</dbReference>
<dbReference type="InterPro" id="IPR050709">
    <property type="entry name" value="Biotin_Carboxyl_Carrier/Decarb"/>
</dbReference>
<dbReference type="InterPro" id="IPR000089">
    <property type="entry name" value="Biotin_lipoyl"/>
</dbReference>
<dbReference type="InterPro" id="IPR011053">
    <property type="entry name" value="Single_hybrid_motif"/>
</dbReference>
<dbReference type="NCBIfam" id="TIGR00531">
    <property type="entry name" value="BCCP"/>
    <property type="match status" value="1"/>
</dbReference>
<dbReference type="PANTHER" id="PTHR45266">
    <property type="entry name" value="OXALOACETATE DECARBOXYLASE ALPHA CHAIN"/>
    <property type="match status" value="1"/>
</dbReference>
<dbReference type="PANTHER" id="PTHR45266:SF3">
    <property type="entry name" value="OXALOACETATE DECARBOXYLASE ALPHA CHAIN"/>
    <property type="match status" value="1"/>
</dbReference>
<dbReference type="Pfam" id="PF00364">
    <property type="entry name" value="Biotin_lipoyl"/>
    <property type="match status" value="1"/>
</dbReference>
<dbReference type="PRINTS" id="PR01071">
    <property type="entry name" value="ACOABIOTINCC"/>
</dbReference>
<dbReference type="SUPFAM" id="SSF51230">
    <property type="entry name" value="Single hybrid motif"/>
    <property type="match status" value="1"/>
</dbReference>
<dbReference type="PROSITE" id="PS00188">
    <property type="entry name" value="BIOTIN"/>
    <property type="match status" value="1"/>
</dbReference>
<dbReference type="PROSITE" id="PS50968">
    <property type="entry name" value="BIOTINYL_LIPOYL"/>
    <property type="match status" value="1"/>
</dbReference>
<feature type="chain" id="PRO_0000146807" description="Biotin carboxyl carrier protein of acetyl-CoA carboxylase">
    <location>
        <begin position="1"/>
        <end position="156"/>
    </location>
</feature>
<feature type="domain" description="Biotinyl-binding" evidence="2">
    <location>
        <begin position="73"/>
        <end position="156"/>
    </location>
</feature>
<feature type="modified residue" description="N6-biotinyllysine" evidence="1 2">
    <location>
        <position position="122"/>
    </location>
</feature>
<evidence type="ECO:0000250" key="1"/>
<evidence type="ECO:0000255" key="2">
    <source>
        <dbReference type="PROSITE-ProRule" id="PRU01066"/>
    </source>
</evidence>
<reference key="1">
    <citation type="journal article" date="2002" name="Proc. Natl. Acad. Sci. U.S.A.">
        <title>Extensive mosaic structure revealed by the complete genome sequence of uropathogenic Escherichia coli.</title>
        <authorList>
            <person name="Welch R.A."/>
            <person name="Burland V."/>
            <person name="Plunkett G. III"/>
            <person name="Redford P."/>
            <person name="Roesch P."/>
            <person name="Rasko D."/>
            <person name="Buckles E.L."/>
            <person name="Liou S.-R."/>
            <person name="Boutin A."/>
            <person name="Hackett J."/>
            <person name="Stroud D."/>
            <person name="Mayhew G.F."/>
            <person name="Rose D.J."/>
            <person name="Zhou S."/>
            <person name="Schwartz D.C."/>
            <person name="Perna N.T."/>
            <person name="Mobley H.L.T."/>
            <person name="Donnenberg M.S."/>
            <person name="Blattner F.R."/>
        </authorList>
    </citation>
    <scope>NUCLEOTIDE SEQUENCE [LARGE SCALE GENOMIC DNA]</scope>
    <source>
        <strain>CFT073 / ATCC 700928 / UPEC</strain>
    </source>
</reference>
<accession>P0ABD9</accession>
<accession>P02905</accession>
<keyword id="KW-0092">Biotin</keyword>
<keyword id="KW-0275">Fatty acid biosynthesis</keyword>
<keyword id="KW-0276">Fatty acid metabolism</keyword>
<keyword id="KW-0444">Lipid biosynthesis</keyword>
<keyword id="KW-0443">Lipid metabolism</keyword>
<keyword id="KW-1185">Reference proteome</keyword>
<comment type="function">
    <text evidence="1">This protein is a component of the acetyl coenzyme A carboxylase complex; first, biotin carboxylase catalyzes the carboxylation of the carrier protein and then the transcarboxylase transfers the carboxyl group to form malonyl-CoA.</text>
</comment>
<comment type="pathway">
    <text>Lipid metabolism; fatty acid biosynthesis.</text>
</comment>
<comment type="subunit">
    <text evidence="1">Homodimer.</text>
</comment>
<name>BCCP_ECOL6</name>
<gene>
    <name type="primary">accB</name>
    <name type="ordered locus">c4011</name>
</gene>
<organism>
    <name type="scientific">Escherichia coli O6:H1 (strain CFT073 / ATCC 700928 / UPEC)</name>
    <dbReference type="NCBI Taxonomy" id="199310"/>
    <lineage>
        <taxon>Bacteria</taxon>
        <taxon>Pseudomonadati</taxon>
        <taxon>Pseudomonadota</taxon>
        <taxon>Gammaproteobacteria</taxon>
        <taxon>Enterobacterales</taxon>
        <taxon>Enterobacteriaceae</taxon>
        <taxon>Escherichia</taxon>
    </lineage>
</organism>
<proteinExistence type="inferred from homology"/>